<gene>
    <name type="primary">FSHR</name>
</gene>
<organism>
    <name type="scientific">Cairina moschata</name>
    <name type="common">Muscovy duck</name>
    <dbReference type="NCBI Taxonomy" id="8855"/>
    <lineage>
        <taxon>Eukaryota</taxon>
        <taxon>Metazoa</taxon>
        <taxon>Chordata</taxon>
        <taxon>Craniata</taxon>
        <taxon>Vertebrata</taxon>
        <taxon>Euteleostomi</taxon>
        <taxon>Archelosauria</taxon>
        <taxon>Archosauria</taxon>
        <taxon>Dinosauria</taxon>
        <taxon>Saurischia</taxon>
        <taxon>Theropoda</taxon>
        <taxon>Coelurosauria</taxon>
        <taxon>Aves</taxon>
        <taxon>Neognathae</taxon>
        <taxon>Galloanserae</taxon>
        <taxon>Anseriformes</taxon>
        <taxon>Anatidae</taxon>
        <taxon>Anatinae</taxon>
        <taxon>Cairina</taxon>
    </lineage>
</organism>
<evidence type="ECO:0000250" key="1">
    <source>
        <dbReference type="UniProtKB" id="P23945"/>
    </source>
</evidence>
<evidence type="ECO:0000255" key="2"/>
<evidence type="ECO:0000255" key="3">
    <source>
        <dbReference type="PROSITE-ProRule" id="PRU00521"/>
    </source>
</evidence>
<keyword id="KW-1003">Cell membrane</keyword>
<keyword id="KW-1015">Disulfide bond</keyword>
<keyword id="KW-0297">G-protein coupled receptor</keyword>
<keyword id="KW-0325">Glycoprotein</keyword>
<keyword id="KW-0433">Leucine-rich repeat</keyword>
<keyword id="KW-0472">Membrane</keyword>
<keyword id="KW-0597">Phosphoprotein</keyword>
<keyword id="KW-0675">Receptor</keyword>
<keyword id="KW-1185">Reference proteome</keyword>
<keyword id="KW-0677">Repeat</keyword>
<keyword id="KW-0732">Signal</keyword>
<keyword id="KW-0807">Transducer</keyword>
<keyword id="KW-0812">Transmembrane</keyword>
<keyword id="KW-1133">Transmembrane helix</keyword>
<reference key="1">
    <citation type="submission" date="2002-04" db="EMBL/GenBank/DDBJ databases">
        <title>Molecular cloning and gene expression of follicle-stimulating hormone receptor in duck testis.</title>
        <authorList>
            <person name="Shen S.T."/>
            <person name="Yu J.Y.L."/>
        </authorList>
    </citation>
    <scope>NUCLEOTIDE SEQUENCE [MRNA]</scope>
    <source>
        <tissue>Testis</tissue>
    </source>
</reference>
<feature type="signal peptide" evidence="2">
    <location>
        <begin position="1"/>
        <end position="18"/>
    </location>
</feature>
<feature type="chain" id="PRO_0000233345" description="Follicle-stimulating hormone receptor">
    <location>
        <begin position="19"/>
        <end position="693"/>
    </location>
</feature>
<feature type="topological domain" description="Extracellular" evidence="2">
    <location>
        <begin position="19"/>
        <end position="366"/>
    </location>
</feature>
<feature type="transmembrane region" description="Helical; Name=1" evidence="2">
    <location>
        <begin position="367"/>
        <end position="387"/>
    </location>
</feature>
<feature type="topological domain" description="Cytoplasmic" evidence="2">
    <location>
        <begin position="388"/>
        <end position="398"/>
    </location>
</feature>
<feature type="transmembrane region" description="Helical; Name=2" evidence="2">
    <location>
        <begin position="399"/>
        <end position="421"/>
    </location>
</feature>
<feature type="topological domain" description="Extracellular" evidence="2">
    <location>
        <begin position="422"/>
        <end position="443"/>
    </location>
</feature>
<feature type="transmembrane region" description="Helical; Name=3" evidence="2">
    <location>
        <begin position="444"/>
        <end position="465"/>
    </location>
</feature>
<feature type="topological domain" description="Cytoplasmic" evidence="2">
    <location>
        <begin position="466"/>
        <end position="485"/>
    </location>
</feature>
<feature type="transmembrane region" description="Helical; Name=4" evidence="2">
    <location>
        <begin position="486"/>
        <end position="508"/>
    </location>
</feature>
<feature type="topological domain" description="Extracellular" evidence="2">
    <location>
        <begin position="509"/>
        <end position="528"/>
    </location>
</feature>
<feature type="transmembrane region" description="Helical; Name=5" evidence="2">
    <location>
        <begin position="529"/>
        <end position="550"/>
    </location>
</feature>
<feature type="topological domain" description="Cytoplasmic" evidence="2">
    <location>
        <begin position="551"/>
        <end position="573"/>
    </location>
</feature>
<feature type="transmembrane region" description="Helical; Name=6" evidence="2">
    <location>
        <begin position="574"/>
        <end position="597"/>
    </location>
</feature>
<feature type="topological domain" description="Extracellular" evidence="2">
    <location>
        <begin position="598"/>
        <end position="608"/>
    </location>
</feature>
<feature type="transmembrane region" description="Helical; Name=7" evidence="2">
    <location>
        <begin position="609"/>
        <end position="630"/>
    </location>
</feature>
<feature type="topological domain" description="Cytoplasmic" evidence="2">
    <location>
        <begin position="631"/>
        <end position="693"/>
    </location>
</feature>
<feature type="domain" description="LRRNT">
    <location>
        <begin position="19"/>
        <end position="46"/>
    </location>
</feature>
<feature type="repeat" description="LRR 1">
    <location>
        <begin position="49"/>
        <end position="72"/>
    </location>
</feature>
<feature type="repeat" description="LRR 2">
    <location>
        <begin position="73"/>
        <end position="97"/>
    </location>
</feature>
<feature type="repeat" description="LRR 3">
    <location>
        <begin position="98"/>
        <end position="118"/>
    </location>
</feature>
<feature type="repeat" description="LRR 4">
    <location>
        <begin position="119"/>
        <end position="143"/>
    </location>
</feature>
<feature type="repeat" description="LRR 5">
    <location>
        <begin position="144"/>
        <end position="169"/>
    </location>
</feature>
<feature type="repeat" description="LRR 6">
    <location>
        <begin position="170"/>
        <end position="192"/>
    </location>
</feature>
<feature type="repeat" description="LRR 7">
    <location>
        <begin position="193"/>
        <end position="216"/>
    </location>
</feature>
<feature type="repeat" description="LRR 8">
    <location>
        <begin position="217"/>
        <end position="240"/>
    </location>
</feature>
<feature type="repeat" description="LRR 9">
    <location>
        <begin position="241"/>
        <end position="259"/>
    </location>
</feature>
<feature type="glycosylation site" description="N-linked (GlcNAc...) asparagine" evidence="2">
    <location>
        <position position="47"/>
    </location>
</feature>
<feature type="glycosylation site" description="N-linked (GlcNAc...) asparagine" evidence="2">
    <location>
        <position position="191"/>
    </location>
</feature>
<feature type="glycosylation site" description="N-linked (GlcNAc...) asparagine" evidence="2">
    <location>
        <position position="199"/>
    </location>
</feature>
<feature type="glycosylation site" description="N-linked (GlcNAc...) asparagine" evidence="2">
    <location>
        <position position="268"/>
    </location>
</feature>
<feature type="disulfide bond" evidence="3">
    <location>
        <begin position="18"/>
        <end position="25"/>
    </location>
</feature>
<feature type="disulfide bond" evidence="3">
    <location>
        <begin position="23"/>
        <end position="32"/>
    </location>
</feature>
<feature type="disulfide bond" evidence="1">
    <location>
        <begin position="275"/>
        <end position="346"/>
    </location>
</feature>
<feature type="disulfide bond" evidence="1">
    <location>
        <begin position="276"/>
        <end position="356"/>
    </location>
</feature>
<feature type="disulfide bond" evidence="1">
    <location>
        <begin position="276"/>
        <end position="292"/>
    </location>
</feature>
<feature type="disulfide bond" evidence="1">
    <location>
        <begin position="292"/>
        <end position="338"/>
    </location>
</feature>
<feature type="disulfide bond" evidence="3">
    <location>
        <begin position="442"/>
        <end position="517"/>
    </location>
</feature>
<sequence>MFLVFTCSLILLASCSSCQHHTCHCAGRIFICQESKVVQLPRDIPTNATELRFVLTKMRVIPKGAFAGLLDLEKIEISQNDALEVIEAKVFSNLPKLHEIRIEKANNLVYIDQDAFQHLPSLRYLLISNTGLRFLPVVQKVHSFQKVLLDIQDNINIRTIERNSFMGLSSESVILWLNKNGIQEIENHAFNGTYLDELNLSDNQNLEKLPNEVFQGANGPVVLDISRTKISFLPGHGLELIKKLRARSTYNLKKLPDLSKFRSLIEANFTYPSHCCAFTNWKRQNTELHPICSISQAKQDLDEQHGNKIHRRSAAEDYISNYAIGFDPSENEFDYGLCNEVVNVACSPKPDAFNPCEDIMGYTILRVLIWFISILAITGNIVVLIILISSQYKLTVPRFLMCNLAFADLCIGIYLLFIASVDIQTKSQYYNYAIDWQTGAGCNAAGFFTVFASELSVYTLTVITLERWHTITYAMQLDRKVRFRHAVIIMIFGWMFAFTVALLPIFGVSSYMKVSICLPMDIETPFSQAYVIFLLVLNVLAFVIICACYICIYFTVRNPNVISSNSDTKIAKRMAILIFTDFLCMAPISFFAISASLKVPLITVSKSKILLVLFYPINSCANPFLYAIFTKTFRRDFFILLSKFGCCEMQAQIYRTDTSSSAHNFHTRNGHYPPASKNSDGTIYSLVPLNHLN</sequence>
<protein>
    <recommendedName>
        <fullName>Follicle-stimulating hormone receptor</fullName>
        <shortName>FSH-R</shortName>
    </recommendedName>
    <alternativeName>
        <fullName>Follitropin receptor</fullName>
    </alternativeName>
</protein>
<proteinExistence type="evidence at transcript level"/>
<dbReference type="EMBL" id="AY099289">
    <property type="protein sequence ID" value="AAM34797.1"/>
    <property type="molecule type" value="mRNA"/>
</dbReference>
<dbReference type="SMR" id="Q7ZTV5"/>
<dbReference type="GlyCosmos" id="Q7ZTV5">
    <property type="glycosylation" value="4 sites, No reported glycans"/>
</dbReference>
<dbReference type="Proteomes" id="UP000694556">
    <property type="component" value="Unplaced"/>
</dbReference>
<dbReference type="GO" id="GO:0016020">
    <property type="term" value="C:membrane"/>
    <property type="evidence" value="ECO:0000250"/>
    <property type="project" value="UniProtKB"/>
</dbReference>
<dbReference type="GO" id="GO:0005886">
    <property type="term" value="C:plasma membrane"/>
    <property type="evidence" value="ECO:0000250"/>
    <property type="project" value="UniProtKB"/>
</dbReference>
<dbReference type="GO" id="GO:0043235">
    <property type="term" value="C:receptor complex"/>
    <property type="evidence" value="ECO:0000250"/>
    <property type="project" value="UniProtKB"/>
</dbReference>
<dbReference type="GO" id="GO:0004963">
    <property type="term" value="F:follicle-stimulating hormone receptor activity"/>
    <property type="evidence" value="ECO:0000250"/>
    <property type="project" value="UniProtKB"/>
</dbReference>
<dbReference type="GO" id="GO:0008528">
    <property type="term" value="F:G protein-coupled peptide receptor activity"/>
    <property type="evidence" value="ECO:0007669"/>
    <property type="project" value="TreeGrafter"/>
</dbReference>
<dbReference type="GO" id="GO:0007189">
    <property type="term" value="P:adenylate cyclase-activating G protein-coupled receptor signaling pathway"/>
    <property type="evidence" value="ECO:0007669"/>
    <property type="project" value="TreeGrafter"/>
</dbReference>
<dbReference type="GO" id="GO:0071372">
    <property type="term" value="P:cellular response to follicle-stimulating hormone stimulus"/>
    <property type="evidence" value="ECO:0000250"/>
    <property type="project" value="UniProtKB"/>
</dbReference>
<dbReference type="GO" id="GO:0042699">
    <property type="term" value="P:follicle-stimulating hormone signaling pathway"/>
    <property type="evidence" value="ECO:0000250"/>
    <property type="project" value="UniProtKB"/>
</dbReference>
<dbReference type="GO" id="GO:0007186">
    <property type="term" value="P:G protein-coupled receptor signaling pathway"/>
    <property type="evidence" value="ECO:0000250"/>
    <property type="project" value="UniProtKB"/>
</dbReference>
<dbReference type="GO" id="GO:0009755">
    <property type="term" value="P:hormone-mediated signaling pathway"/>
    <property type="evidence" value="ECO:0007669"/>
    <property type="project" value="TreeGrafter"/>
</dbReference>
<dbReference type="GO" id="GO:0008584">
    <property type="term" value="P:male gonad development"/>
    <property type="evidence" value="ECO:0007669"/>
    <property type="project" value="TreeGrafter"/>
</dbReference>
<dbReference type="GO" id="GO:0070374">
    <property type="term" value="P:positive regulation of ERK1 and ERK2 cascade"/>
    <property type="evidence" value="ECO:0000250"/>
    <property type="project" value="UniProtKB"/>
</dbReference>
<dbReference type="GO" id="GO:0051897">
    <property type="term" value="P:positive regulation of phosphatidylinositol 3-kinase/protein kinase B signal transduction"/>
    <property type="evidence" value="ECO:0000250"/>
    <property type="project" value="UniProtKB"/>
</dbReference>
<dbReference type="GO" id="GO:0010738">
    <property type="term" value="P:regulation of protein kinase A signaling"/>
    <property type="evidence" value="ECO:0000250"/>
    <property type="project" value="UniProtKB"/>
</dbReference>
<dbReference type="CDD" id="cd15360">
    <property type="entry name" value="7tmA_FSH-R"/>
    <property type="match status" value="1"/>
</dbReference>
<dbReference type="FunFam" id="1.20.1070.10:FF:000019">
    <property type="entry name" value="Lutropin-choriogonadotropic hormone receptor"/>
    <property type="match status" value="1"/>
</dbReference>
<dbReference type="Gene3D" id="1.20.1070.10">
    <property type="entry name" value="Rhodopsin 7-helix transmembrane proteins"/>
    <property type="match status" value="1"/>
</dbReference>
<dbReference type="Gene3D" id="3.80.10.10">
    <property type="entry name" value="Ribonuclease Inhibitor"/>
    <property type="match status" value="1"/>
</dbReference>
<dbReference type="InterPro" id="IPR002272">
    <property type="entry name" value="FSH_rcpt"/>
</dbReference>
<dbReference type="InterPro" id="IPR024635">
    <property type="entry name" value="GnHR_TM"/>
</dbReference>
<dbReference type="InterPro" id="IPR000276">
    <property type="entry name" value="GPCR_Rhodpsn"/>
</dbReference>
<dbReference type="InterPro" id="IPR017452">
    <property type="entry name" value="GPCR_Rhodpsn_7TM"/>
</dbReference>
<dbReference type="InterPro" id="IPR002131">
    <property type="entry name" value="Gphrmn_rcpt_fam"/>
</dbReference>
<dbReference type="InterPro" id="IPR026906">
    <property type="entry name" value="LRR_5"/>
</dbReference>
<dbReference type="InterPro" id="IPR032675">
    <property type="entry name" value="LRR_dom_sf"/>
</dbReference>
<dbReference type="PANTHER" id="PTHR24372:SF5">
    <property type="entry name" value="FOLLICLE-STIMULATING HORMONE RECEPTOR"/>
    <property type="match status" value="1"/>
</dbReference>
<dbReference type="PANTHER" id="PTHR24372">
    <property type="entry name" value="GLYCOPROTEIN HORMONE RECEPTOR"/>
    <property type="match status" value="1"/>
</dbReference>
<dbReference type="Pfam" id="PF00001">
    <property type="entry name" value="7tm_1"/>
    <property type="match status" value="1"/>
</dbReference>
<dbReference type="Pfam" id="PF12369">
    <property type="entry name" value="GnHR_trans"/>
    <property type="match status" value="1"/>
</dbReference>
<dbReference type="Pfam" id="PF13306">
    <property type="entry name" value="LRR_5"/>
    <property type="match status" value="2"/>
</dbReference>
<dbReference type="PRINTS" id="PR01143">
    <property type="entry name" value="FSHRECEPTOR"/>
</dbReference>
<dbReference type="PRINTS" id="PR00373">
    <property type="entry name" value="GLYCHORMONER"/>
</dbReference>
<dbReference type="PRINTS" id="PR00237">
    <property type="entry name" value="GPCRRHODOPSN"/>
</dbReference>
<dbReference type="SUPFAM" id="SSF81321">
    <property type="entry name" value="Family A G protein-coupled receptor-like"/>
    <property type="match status" value="1"/>
</dbReference>
<dbReference type="SUPFAM" id="SSF52058">
    <property type="entry name" value="L domain-like"/>
    <property type="match status" value="1"/>
</dbReference>
<dbReference type="PROSITE" id="PS00237">
    <property type="entry name" value="G_PROTEIN_RECEP_F1_1"/>
    <property type="match status" value="1"/>
</dbReference>
<dbReference type="PROSITE" id="PS50262">
    <property type="entry name" value="G_PROTEIN_RECEP_F1_2"/>
    <property type="match status" value="1"/>
</dbReference>
<accession>Q7ZTV5</accession>
<comment type="function">
    <text evidence="1">G protein-coupled receptor for follitropin, the follicle-stimulating hormone. Through cAMP production activates the downstream PI3K-AKT and ERK1/ERK2 signaling pathways.</text>
</comment>
<comment type="subunit">
    <text evidence="1">Homotrimer. Functions as a homotrimer binding the FSH hormone heterodimer composed of CGA and FSHB.</text>
</comment>
<comment type="subcellular location">
    <subcellularLocation>
        <location evidence="1">Cell membrane</location>
        <topology evidence="1">Multi-pass membrane protein</topology>
    </subcellularLocation>
</comment>
<comment type="similarity">
    <text evidence="3">Belongs to the G-protein coupled receptor 1 family. FSH/LSH/TSH subfamily.</text>
</comment>
<name>FSHR_CAIMO</name>